<proteinExistence type="inferred from homology"/>
<dbReference type="EC" id="2.7.1.130" evidence="1"/>
<dbReference type="EMBL" id="CP001120">
    <property type="protein sequence ID" value="ACF66549.1"/>
    <property type="molecule type" value="Genomic_DNA"/>
</dbReference>
<dbReference type="RefSeq" id="WP_000561682.1">
    <property type="nucleotide sequence ID" value="NC_011083.1"/>
</dbReference>
<dbReference type="SMR" id="B4TDQ2"/>
<dbReference type="KEGG" id="seh:SeHA_C1083"/>
<dbReference type="HOGENOM" id="CLU_038816_2_0_6"/>
<dbReference type="UniPathway" id="UPA00359">
    <property type="reaction ID" value="UER00482"/>
</dbReference>
<dbReference type="Proteomes" id="UP000001866">
    <property type="component" value="Chromosome"/>
</dbReference>
<dbReference type="GO" id="GO:0005886">
    <property type="term" value="C:plasma membrane"/>
    <property type="evidence" value="ECO:0007669"/>
    <property type="project" value="TreeGrafter"/>
</dbReference>
<dbReference type="GO" id="GO:0005524">
    <property type="term" value="F:ATP binding"/>
    <property type="evidence" value="ECO:0007669"/>
    <property type="project" value="UniProtKB-UniRule"/>
</dbReference>
<dbReference type="GO" id="GO:0009029">
    <property type="term" value="F:tetraacyldisaccharide 4'-kinase activity"/>
    <property type="evidence" value="ECO:0007669"/>
    <property type="project" value="UniProtKB-UniRule"/>
</dbReference>
<dbReference type="GO" id="GO:0009245">
    <property type="term" value="P:lipid A biosynthetic process"/>
    <property type="evidence" value="ECO:0007669"/>
    <property type="project" value="UniProtKB-UniRule"/>
</dbReference>
<dbReference type="GO" id="GO:0009244">
    <property type="term" value="P:lipopolysaccharide core region biosynthetic process"/>
    <property type="evidence" value="ECO:0007669"/>
    <property type="project" value="TreeGrafter"/>
</dbReference>
<dbReference type="HAMAP" id="MF_00409">
    <property type="entry name" value="LpxK"/>
    <property type="match status" value="1"/>
</dbReference>
<dbReference type="InterPro" id="IPR003758">
    <property type="entry name" value="LpxK"/>
</dbReference>
<dbReference type="InterPro" id="IPR027417">
    <property type="entry name" value="P-loop_NTPase"/>
</dbReference>
<dbReference type="NCBIfam" id="TIGR00682">
    <property type="entry name" value="lpxK"/>
    <property type="match status" value="1"/>
</dbReference>
<dbReference type="PANTHER" id="PTHR42724">
    <property type="entry name" value="TETRAACYLDISACCHARIDE 4'-KINASE"/>
    <property type="match status" value="1"/>
</dbReference>
<dbReference type="PANTHER" id="PTHR42724:SF1">
    <property type="entry name" value="TETRAACYLDISACCHARIDE 4'-KINASE, MITOCHONDRIAL-RELATED"/>
    <property type="match status" value="1"/>
</dbReference>
<dbReference type="Pfam" id="PF02606">
    <property type="entry name" value="LpxK"/>
    <property type="match status" value="1"/>
</dbReference>
<dbReference type="SUPFAM" id="SSF52540">
    <property type="entry name" value="P-loop containing nucleoside triphosphate hydrolases"/>
    <property type="match status" value="1"/>
</dbReference>
<name>LPXK_SALHS</name>
<keyword id="KW-0067">ATP-binding</keyword>
<keyword id="KW-0418">Kinase</keyword>
<keyword id="KW-0441">Lipid A biosynthesis</keyword>
<keyword id="KW-0444">Lipid biosynthesis</keyword>
<keyword id="KW-0443">Lipid metabolism</keyword>
<keyword id="KW-0547">Nucleotide-binding</keyword>
<keyword id="KW-0808">Transferase</keyword>
<protein>
    <recommendedName>
        <fullName evidence="1">Tetraacyldisaccharide 4'-kinase</fullName>
        <ecNumber evidence="1">2.7.1.130</ecNumber>
    </recommendedName>
    <alternativeName>
        <fullName evidence="1">Lipid A 4'-kinase</fullName>
    </alternativeName>
</protein>
<feature type="chain" id="PRO_1000123740" description="Tetraacyldisaccharide 4'-kinase">
    <location>
        <begin position="1"/>
        <end position="325"/>
    </location>
</feature>
<feature type="binding site" evidence="1">
    <location>
        <begin position="55"/>
        <end position="62"/>
    </location>
    <ligand>
        <name>ATP</name>
        <dbReference type="ChEBI" id="CHEBI:30616"/>
    </ligand>
</feature>
<reference key="1">
    <citation type="journal article" date="2011" name="J. Bacteriol.">
        <title>Comparative genomics of 28 Salmonella enterica isolates: evidence for CRISPR-mediated adaptive sublineage evolution.</title>
        <authorList>
            <person name="Fricke W.F."/>
            <person name="Mammel M.K."/>
            <person name="McDermott P.F."/>
            <person name="Tartera C."/>
            <person name="White D.G."/>
            <person name="Leclerc J.E."/>
            <person name="Ravel J."/>
            <person name="Cebula T.A."/>
        </authorList>
    </citation>
    <scope>NUCLEOTIDE SEQUENCE [LARGE SCALE GENOMIC DNA]</scope>
    <source>
        <strain>SL476</strain>
    </source>
</reference>
<accession>B4TDQ2</accession>
<sequence length="325" mass="35012">MIARIWSGESPLWRLLLPLSWLYGLVSGAIRLSYKLGFKRAWRAPVPVVVVGNLTAGGNGKTPVVIWLVEKLQQRGVRVGVVSRGYGGKAAAYPLLLTPETTTAEAGDEPVLIYQRTGAPVAVAPERAAAVKAILAAHNVQIIITDDGLQHYRLARDIEIVVIDGVRRFGNGWWLPAGPMRERASRLKTVDAAIVNGGVARAGEIPMQLAPGLAVNLRTGARCDVAQLSNIVAMAGIGHPPRFFATLEACGAHPQKCVPLADHQTLSPADVQALVGEGQTLVMTEKDAVKCRAFAEDNWWFLPVDARLSGEQPDKLLEHITSLVR</sequence>
<evidence type="ECO:0000255" key="1">
    <source>
        <dbReference type="HAMAP-Rule" id="MF_00409"/>
    </source>
</evidence>
<comment type="function">
    <text evidence="1">Transfers the gamma-phosphate of ATP to the 4'-position of a tetraacyldisaccharide 1-phosphate intermediate (termed DS-1-P) to form tetraacyldisaccharide 1,4'-bis-phosphate (lipid IVA).</text>
</comment>
<comment type="catalytic activity">
    <reaction evidence="1">
        <text>a lipid A disaccharide + ATP = a lipid IVA + ADP + H(+)</text>
        <dbReference type="Rhea" id="RHEA:67840"/>
        <dbReference type="ChEBI" id="CHEBI:15378"/>
        <dbReference type="ChEBI" id="CHEBI:30616"/>
        <dbReference type="ChEBI" id="CHEBI:176343"/>
        <dbReference type="ChEBI" id="CHEBI:176425"/>
        <dbReference type="ChEBI" id="CHEBI:456216"/>
        <dbReference type="EC" id="2.7.1.130"/>
    </reaction>
</comment>
<comment type="pathway">
    <text evidence="1">Glycolipid biosynthesis; lipid IV(A) biosynthesis; lipid IV(A) from (3R)-3-hydroxytetradecanoyl-[acyl-carrier-protein] and UDP-N-acetyl-alpha-D-glucosamine: step 6/6.</text>
</comment>
<comment type="similarity">
    <text evidence="1">Belongs to the LpxK family.</text>
</comment>
<organism>
    <name type="scientific">Salmonella heidelberg (strain SL476)</name>
    <dbReference type="NCBI Taxonomy" id="454169"/>
    <lineage>
        <taxon>Bacteria</taxon>
        <taxon>Pseudomonadati</taxon>
        <taxon>Pseudomonadota</taxon>
        <taxon>Gammaproteobacteria</taxon>
        <taxon>Enterobacterales</taxon>
        <taxon>Enterobacteriaceae</taxon>
        <taxon>Salmonella</taxon>
    </lineage>
</organism>
<gene>
    <name evidence="1" type="primary">lpxK</name>
    <name type="ordered locus">SeHA_C1083</name>
</gene>